<feature type="chain" id="PRO_0000233218" description="Cytochrome b559 subunit alpha">
    <location>
        <begin position="1"/>
        <end position="82"/>
    </location>
</feature>
<feature type="transmembrane region" description="Helical" evidence="1">
    <location>
        <begin position="22"/>
        <end position="36"/>
    </location>
</feature>
<feature type="binding site" description="axial binding residue" evidence="1">
    <location>
        <position position="24"/>
    </location>
    <ligand>
        <name>heme</name>
        <dbReference type="ChEBI" id="CHEBI:30413"/>
        <note>ligand shared with beta subunit</note>
    </ligand>
    <ligandPart>
        <name>Fe</name>
        <dbReference type="ChEBI" id="CHEBI:18248"/>
    </ligandPart>
</feature>
<dbReference type="EMBL" id="BX548175">
    <property type="protein sequence ID" value="CAE22071.1"/>
    <property type="molecule type" value="Genomic_DNA"/>
</dbReference>
<dbReference type="RefSeq" id="WP_011131262.1">
    <property type="nucleotide sequence ID" value="NC_005071.1"/>
</dbReference>
<dbReference type="SMR" id="Q7V4Q2"/>
<dbReference type="KEGG" id="pmt:PMT_1896"/>
<dbReference type="eggNOG" id="ENOG5032RR6">
    <property type="taxonomic scope" value="Bacteria"/>
</dbReference>
<dbReference type="HOGENOM" id="CLU_194095_0_0_3"/>
<dbReference type="OrthoDB" id="514620at2"/>
<dbReference type="Proteomes" id="UP000001423">
    <property type="component" value="Chromosome"/>
</dbReference>
<dbReference type="GO" id="GO:0009523">
    <property type="term" value="C:photosystem II"/>
    <property type="evidence" value="ECO:0007669"/>
    <property type="project" value="UniProtKB-KW"/>
</dbReference>
<dbReference type="GO" id="GO:0031676">
    <property type="term" value="C:plasma membrane-derived thylakoid membrane"/>
    <property type="evidence" value="ECO:0007669"/>
    <property type="project" value="UniProtKB-SubCell"/>
</dbReference>
<dbReference type="GO" id="GO:0009055">
    <property type="term" value="F:electron transfer activity"/>
    <property type="evidence" value="ECO:0007669"/>
    <property type="project" value="UniProtKB-UniRule"/>
</dbReference>
<dbReference type="GO" id="GO:0020037">
    <property type="term" value="F:heme binding"/>
    <property type="evidence" value="ECO:0007669"/>
    <property type="project" value="InterPro"/>
</dbReference>
<dbReference type="GO" id="GO:0005506">
    <property type="term" value="F:iron ion binding"/>
    <property type="evidence" value="ECO:0007669"/>
    <property type="project" value="UniProtKB-UniRule"/>
</dbReference>
<dbReference type="GO" id="GO:0009767">
    <property type="term" value="P:photosynthetic electron transport chain"/>
    <property type="evidence" value="ECO:0007669"/>
    <property type="project" value="InterPro"/>
</dbReference>
<dbReference type="Gene3D" id="1.20.5.860">
    <property type="entry name" value="Photosystem II cytochrome b559, alpha subunit"/>
    <property type="match status" value="1"/>
</dbReference>
<dbReference type="HAMAP" id="MF_00642">
    <property type="entry name" value="PSII_PsbE"/>
    <property type="match status" value="1"/>
</dbReference>
<dbReference type="InterPro" id="IPR006217">
    <property type="entry name" value="PSII_cyt_b559_asu"/>
</dbReference>
<dbReference type="InterPro" id="IPR037025">
    <property type="entry name" value="PSII_cyt_b559_asu_sf"/>
</dbReference>
<dbReference type="InterPro" id="IPR013081">
    <property type="entry name" value="PSII_cyt_b559_N"/>
</dbReference>
<dbReference type="InterPro" id="IPR013082">
    <property type="entry name" value="PSII_cytb559_asu_lum"/>
</dbReference>
<dbReference type="NCBIfam" id="TIGR01332">
    <property type="entry name" value="cyt_b559_alpha"/>
    <property type="match status" value="1"/>
</dbReference>
<dbReference type="PANTHER" id="PTHR33391">
    <property type="entry name" value="CYTOCHROME B559 SUBUNIT BETA-RELATED"/>
    <property type="match status" value="1"/>
</dbReference>
<dbReference type="PANTHER" id="PTHR33391:SF9">
    <property type="entry name" value="CYTOCHROME B559 SUBUNIT BETA-RELATED"/>
    <property type="match status" value="1"/>
</dbReference>
<dbReference type="Pfam" id="PF00283">
    <property type="entry name" value="Cytochrom_B559"/>
    <property type="match status" value="1"/>
</dbReference>
<dbReference type="Pfam" id="PF00284">
    <property type="entry name" value="Cytochrom_B559a"/>
    <property type="match status" value="1"/>
</dbReference>
<dbReference type="PIRSF" id="PIRSF000036">
    <property type="entry name" value="PsbE"/>
    <property type="match status" value="1"/>
</dbReference>
<dbReference type="SUPFAM" id="SSF161045">
    <property type="entry name" value="Cytochrome b559 subunits"/>
    <property type="match status" value="1"/>
</dbReference>
<protein>
    <recommendedName>
        <fullName evidence="1">Cytochrome b559 subunit alpha</fullName>
    </recommendedName>
    <alternativeName>
        <fullName evidence="1">PSII reaction center subunit V</fullName>
    </alternativeName>
</protein>
<accession>Q7V4Q2</accession>
<name>PSBE_PROMM</name>
<gene>
    <name evidence="1" type="primary">psbE</name>
    <name type="ordered locus">PMT_1896</name>
</gene>
<proteinExistence type="inferred from homology"/>
<organism>
    <name type="scientific">Prochlorococcus marinus (strain MIT 9313)</name>
    <dbReference type="NCBI Taxonomy" id="74547"/>
    <lineage>
        <taxon>Bacteria</taxon>
        <taxon>Bacillati</taxon>
        <taxon>Cyanobacteriota</taxon>
        <taxon>Cyanophyceae</taxon>
        <taxon>Synechococcales</taxon>
        <taxon>Prochlorococcaceae</taxon>
        <taxon>Prochlorococcus</taxon>
    </lineage>
</organism>
<keyword id="KW-0249">Electron transport</keyword>
<keyword id="KW-0349">Heme</keyword>
<keyword id="KW-0408">Iron</keyword>
<keyword id="KW-0472">Membrane</keyword>
<keyword id="KW-0479">Metal-binding</keyword>
<keyword id="KW-0602">Photosynthesis</keyword>
<keyword id="KW-0604">Photosystem II</keyword>
<keyword id="KW-1185">Reference proteome</keyword>
<keyword id="KW-0793">Thylakoid</keyword>
<keyword id="KW-0812">Transmembrane</keyword>
<keyword id="KW-1133">Transmembrane helix</keyword>
<keyword id="KW-0813">Transport</keyword>
<sequence length="82" mass="9136">MAAGSTGERPFFEIVTSIRYWVIHAVTLPSIFLAGYLFVSTGLAYDTFGTPRPDAYFQASESKAPVVSQRYEAKSQLDLRLQ</sequence>
<comment type="function">
    <text evidence="1">This b-type cytochrome is tightly associated with the reaction center of photosystem II (PSII). PSII is a light-driven water:plastoquinone oxidoreductase that uses light energy to abstract electrons from H(2)O, generating O(2) and a proton gradient subsequently used for ATP formation. It consists of a core antenna complex that captures photons, and an electron transfer chain that converts photonic excitation into a charge separation.</text>
</comment>
<comment type="cofactor">
    <cofactor evidence="1">
        <name>heme b</name>
        <dbReference type="ChEBI" id="CHEBI:60344"/>
    </cofactor>
    <text evidence="1">With its partner (PsbF) binds heme. PSII binds additional chlorophylls, carotenoids and specific lipids.</text>
</comment>
<comment type="subunit">
    <text evidence="2">Heterodimer of an alpha subunit and a beta subunit. PSII is composed of 1 copy each of membrane proteins PsbA, PsbB, PsbC, PsbD, PsbE, PsbF, PsbH, PsbI, PsbJ, PsbK, PsbL, PsbM, PsbT, PsbX, PsbY, Psb30/Ycf12, peripheral proteins PsbO, CyanoQ (PsbQ), PsbU, PsbV and a large number of cofactors. It forms dimeric complexes.</text>
</comment>
<comment type="subcellular location">
    <subcellularLocation>
        <location evidence="1">Cellular thylakoid membrane</location>
        <topology evidence="1">Single-pass membrane protein</topology>
    </subcellularLocation>
</comment>
<comment type="similarity">
    <text evidence="1">Belongs to the PsbE/PsbF family.</text>
</comment>
<evidence type="ECO:0000255" key="1">
    <source>
        <dbReference type="HAMAP-Rule" id="MF_00642"/>
    </source>
</evidence>
<evidence type="ECO:0000305" key="2"/>
<reference key="1">
    <citation type="journal article" date="2003" name="Nature">
        <title>Genome divergence in two Prochlorococcus ecotypes reflects oceanic niche differentiation.</title>
        <authorList>
            <person name="Rocap G."/>
            <person name="Larimer F.W."/>
            <person name="Lamerdin J.E."/>
            <person name="Malfatti S."/>
            <person name="Chain P."/>
            <person name="Ahlgren N.A."/>
            <person name="Arellano A."/>
            <person name="Coleman M."/>
            <person name="Hauser L."/>
            <person name="Hess W.R."/>
            <person name="Johnson Z.I."/>
            <person name="Land M.L."/>
            <person name="Lindell D."/>
            <person name="Post A.F."/>
            <person name="Regala W."/>
            <person name="Shah M."/>
            <person name="Shaw S.L."/>
            <person name="Steglich C."/>
            <person name="Sullivan M.B."/>
            <person name="Ting C.S."/>
            <person name="Tolonen A."/>
            <person name="Webb E.A."/>
            <person name="Zinser E.R."/>
            <person name="Chisholm S.W."/>
        </authorList>
    </citation>
    <scope>NUCLEOTIDE SEQUENCE [LARGE SCALE GENOMIC DNA]</scope>
    <source>
        <strain>MIT 9313</strain>
    </source>
</reference>